<accession>Q5L2S4</accession>
<protein>
    <recommendedName>
        <fullName evidence="1">Glutamate-1-semialdehyde 2,1-aminomutase 1</fullName>
        <shortName evidence="1">GSA 1</shortName>
        <ecNumber evidence="1">5.4.3.8</ecNumber>
    </recommendedName>
    <alternativeName>
        <fullName evidence="1">Glutamate-1-semialdehyde aminotransferase 1</fullName>
        <shortName evidence="1">GSA-AT 1</shortName>
    </alternativeName>
</protein>
<evidence type="ECO:0000255" key="1">
    <source>
        <dbReference type="HAMAP-Rule" id="MF_00375"/>
    </source>
</evidence>
<keyword id="KW-0963">Cytoplasm</keyword>
<keyword id="KW-0413">Isomerase</keyword>
<keyword id="KW-0627">Porphyrin biosynthesis</keyword>
<keyword id="KW-0663">Pyridoxal phosphate</keyword>
<keyword id="KW-1185">Reference proteome</keyword>
<sequence length="428" mass="46142">MQWTKSEQLYKEALQHIVGGVNSPSRSYKAVGGGAPVVMERAQGAYFWDVDGNKYIDYLAAYGPIIAGHAHPHIAEAIRRAAETGVLYGTPTPHEITFAKMLKEAIPSLEKVRFVNSGTEAVMTTIRVARAYTGRSKIVKFEGCYHGHSDLVLVAAGSGPSTLGTPDSAGVPPSIAQEVITVPYNDVESFREAMNVWGEQVAAVLVEPIVGNFGIVLPKPGFLEAINEIAHKEGALVIYDEVITAFRFMYGGAQNLLGVEPDLTAMGKIIGGGLPIGAYGGRQDIMEQVAPLGPAYQAGTMAGNPASVLAGIACLEVLKQEGVYEHLDRLGAMLEEGILAHARQCGLPVTVNRLKGALTVFFTDEKVENYKQAQRSDGELFAKFFKLMLKQGINLAPSKYEAWFITLAHTEDDIAYTIDAVGKAFRQL</sequence>
<dbReference type="EC" id="5.4.3.8" evidence="1"/>
<dbReference type="EMBL" id="BA000043">
    <property type="protein sequence ID" value="BAD74756.1"/>
    <property type="molecule type" value="Genomic_DNA"/>
</dbReference>
<dbReference type="RefSeq" id="WP_011229975.1">
    <property type="nucleotide sequence ID" value="NC_006510.1"/>
</dbReference>
<dbReference type="SMR" id="Q5L2S4"/>
<dbReference type="STRING" id="235909.GK0471"/>
<dbReference type="KEGG" id="gka:GK0471"/>
<dbReference type="PATRIC" id="fig|235909.7.peg.551"/>
<dbReference type="eggNOG" id="COG0001">
    <property type="taxonomic scope" value="Bacteria"/>
</dbReference>
<dbReference type="HOGENOM" id="CLU_016922_1_5_9"/>
<dbReference type="UniPathway" id="UPA00251">
    <property type="reaction ID" value="UER00317"/>
</dbReference>
<dbReference type="Proteomes" id="UP000001172">
    <property type="component" value="Chromosome"/>
</dbReference>
<dbReference type="GO" id="GO:0005737">
    <property type="term" value="C:cytoplasm"/>
    <property type="evidence" value="ECO:0007669"/>
    <property type="project" value="UniProtKB-SubCell"/>
</dbReference>
<dbReference type="GO" id="GO:0042286">
    <property type="term" value="F:glutamate-1-semialdehyde 2,1-aminomutase activity"/>
    <property type="evidence" value="ECO:0007669"/>
    <property type="project" value="UniProtKB-UniRule"/>
</dbReference>
<dbReference type="GO" id="GO:0030170">
    <property type="term" value="F:pyridoxal phosphate binding"/>
    <property type="evidence" value="ECO:0007669"/>
    <property type="project" value="InterPro"/>
</dbReference>
<dbReference type="GO" id="GO:0008483">
    <property type="term" value="F:transaminase activity"/>
    <property type="evidence" value="ECO:0007669"/>
    <property type="project" value="InterPro"/>
</dbReference>
<dbReference type="GO" id="GO:0006782">
    <property type="term" value="P:protoporphyrinogen IX biosynthetic process"/>
    <property type="evidence" value="ECO:0007669"/>
    <property type="project" value="UniProtKB-UniRule"/>
</dbReference>
<dbReference type="CDD" id="cd00610">
    <property type="entry name" value="OAT_like"/>
    <property type="match status" value="1"/>
</dbReference>
<dbReference type="FunFam" id="3.40.640.10:FF:000021">
    <property type="entry name" value="Glutamate-1-semialdehyde 2,1-aminomutase"/>
    <property type="match status" value="1"/>
</dbReference>
<dbReference type="Gene3D" id="3.90.1150.10">
    <property type="entry name" value="Aspartate Aminotransferase, domain 1"/>
    <property type="match status" value="1"/>
</dbReference>
<dbReference type="Gene3D" id="3.40.640.10">
    <property type="entry name" value="Type I PLP-dependent aspartate aminotransferase-like (Major domain)"/>
    <property type="match status" value="1"/>
</dbReference>
<dbReference type="HAMAP" id="MF_00375">
    <property type="entry name" value="HemL_aminotrans_3"/>
    <property type="match status" value="1"/>
</dbReference>
<dbReference type="InterPro" id="IPR004639">
    <property type="entry name" value="4pyrrol_synth_GluAld_NH2Trfase"/>
</dbReference>
<dbReference type="InterPro" id="IPR005814">
    <property type="entry name" value="Aminotrans_3"/>
</dbReference>
<dbReference type="InterPro" id="IPR049704">
    <property type="entry name" value="Aminotrans_3_PPA_site"/>
</dbReference>
<dbReference type="InterPro" id="IPR015424">
    <property type="entry name" value="PyrdxlP-dep_Trfase"/>
</dbReference>
<dbReference type="InterPro" id="IPR015421">
    <property type="entry name" value="PyrdxlP-dep_Trfase_major"/>
</dbReference>
<dbReference type="InterPro" id="IPR015422">
    <property type="entry name" value="PyrdxlP-dep_Trfase_small"/>
</dbReference>
<dbReference type="NCBIfam" id="TIGR00713">
    <property type="entry name" value="hemL"/>
    <property type="match status" value="1"/>
</dbReference>
<dbReference type="NCBIfam" id="NF000818">
    <property type="entry name" value="PRK00062.1"/>
    <property type="match status" value="1"/>
</dbReference>
<dbReference type="NCBIfam" id="NF009055">
    <property type="entry name" value="PRK12389.1"/>
    <property type="match status" value="1"/>
</dbReference>
<dbReference type="PANTHER" id="PTHR43713">
    <property type="entry name" value="GLUTAMATE-1-SEMIALDEHYDE 2,1-AMINOMUTASE"/>
    <property type="match status" value="1"/>
</dbReference>
<dbReference type="PANTHER" id="PTHR43713:SF1">
    <property type="entry name" value="GLUTAMATE-1-SEMIALDEHYDE 2,1-AMINOMUTASE 2"/>
    <property type="match status" value="1"/>
</dbReference>
<dbReference type="Pfam" id="PF00202">
    <property type="entry name" value="Aminotran_3"/>
    <property type="match status" value="1"/>
</dbReference>
<dbReference type="SUPFAM" id="SSF53383">
    <property type="entry name" value="PLP-dependent transferases"/>
    <property type="match status" value="1"/>
</dbReference>
<dbReference type="PROSITE" id="PS00600">
    <property type="entry name" value="AA_TRANSFER_CLASS_3"/>
    <property type="match status" value="1"/>
</dbReference>
<reference key="1">
    <citation type="journal article" date="2004" name="Nucleic Acids Res.">
        <title>Thermoadaptation trait revealed by the genome sequence of thermophilic Geobacillus kaustophilus.</title>
        <authorList>
            <person name="Takami H."/>
            <person name="Takaki Y."/>
            <person name="Chee G.-J."/>
            <person name="Nishi S."/>
            <person name="Shimamura S."/>
            <person name="Suzuki H."/>
            <person name="Matsui S."/>
            <person name="Uchiyama I."/>
        </authorList>
    </citation>
    <scope>NUCLEOTIDE SEQUENCE [LARGE SCALE GENOMIC DNA]</scope>
    <source>
        <strain>HTA426</strain>
    </source>
</reference>
<proteinExistence type="inferred from homology"/>
<name>GSA1_GEOKA</name>
<organism>
    <name type="scientific">Geobacillus kaustophilus (strain HTA426)</name>
    <dbReference type="NCBI Taxonomy" id="235909"/>
    <lineage>
        <taxon>Bacteria</taxon>
        <taxon>Bacillati</taxon>
        <taxon>Bacillota</taxon>
        <taxon>Bacilli</taxon>
        <taxon>Bacillales</taxon>
        <taxon>Anoxybacillaceae</taxon>
        <taxon>Geobacillus</taxon>
        <taxon>Geobacillus thermoleovorans group</taxon>
    </lineage>
</organism>
<comment type="catalytic activity">
    <reaction evidence="1">
        <text>(S)-4-amino-5-oxopentanoate = 5-aminolevulinate</text>
        <dbReference type="Rhea" id="RHEA:14265"/>
        <dbReference type="ChEBI" id="CHEBI:57501"/>
        <dbReference type="ChEBI" id="CHEBI:356416"/>
        <dbReference type="EC" id="5.4.3.8"/>
    </reaction>
</comment>
<comment type="cofactor">
    <cofactor evidence="1">
        <name>pyridoxal 5'-phosphate</name>
        <dbReference type="ChEBI" id="CHEBI:597326"/>
    </cofactor>
</comment>
<comment type="pathway">
    <text evidence="1">Porphyrin-containing compound metabolism; protoporphyrin-IX biosynthesis; 5-aminolevulinate from L-glutamyl-tRNA(Glu): step 2/2.</text>
</comment>
<comment type="subunit">
    <text evidence="1">Homodimer.</text>
</comment>
<comment type="subcellular location">
    <subcellularLocation>
        <location evidence="1">Cytoplasm</location>
    </subcellularLocation>
</comment>
<comment type="similarity">
    <text evidence="1">Belongs to the class-III pyridoxal-phosphate-dependent aminotransferase family. HemL subfamily.</text>
</comment>
<gene>
    <name evidence="1" type="primary">hemL1</name>
    <name type="ordered locus">GK0471</name>
</gene>
<feature type="chain" id="PRO_0000243573" description="Glutamate-1-semialdehyde 2,1-aminomutase 1">
    <location>
        <begin position="1"/>
        <end position="428"/>
    </location>
</feature>
<feature type="modified residue" description="N6-(pyridoxal phosphate)lysine" evidence="1">
    <location>
        <position position="268"/>
    </location>
</feature>